<comment type="function">
    <text evidence="19">Pseudokinase that acts as an allosteric activator of the Golgi serine/threonine protein kinase FAM20C and is involved in biomineralization of teeth. Forms a complex with FAM20C and increases the ability of FAM20C to phosphorylate the proteins that form the 'matrix' that guides the deposition of the enamel minerals.</text>
</comment>
<comment type="subunit">
    <text evidence="19">Interacts with FAM20C; probably forming a heterotetramer of 2 subunits of FAM20A and 2 subunits of FAM20C.</text>
</comment>
<comment type="interaction">
    <interactant intactId="EBI-11892970">
        <id>Q96MK3</id>
    </interactant>
    <interactant intactId="EBI-7147442">
        <id>Q8IXL6</id>
        <label>FAM20C</label>
    </interactant>
    <organismsDiffer>false</organismsDiffer>
    <experiments>3</experiments>
</comment>
<comment type="subcellular location">
    <subcellularLocation>
        <location evidence="1">Secreted</location>
    </subcellularLocation>
    <subcellularLocation>
        <location evidence="13">Golgi apparatus</location>
    </subcellularLocation>
    <subcellularLocation>
        <location evidence="1">Endoplasmic reticulum</location>
    </subcellularLocation>
</comment>
<comment type="tissue specificity">
    <text evidence="8">Highly expressed in lung and liver. Intermediate levels in thymus and ovary.</text>
</comment>
<comment type="PTM">
    <text evidence="1">N-glycosylated.</text>
</comment>
<comment type="disease" evidence="10 11 12 13 14 15 16 17 18 19 20">
    <disease id="DI-04208">
        <name>Amelogenesis imperfecta 1G</name>
        <acronym>AI1G</acronym>
        <description>A disorder characterized by dental anomalies, gingival overgrowth, and nephrocalcinosis. Dental anomalies include hypoplastic amelogenesis imperfecta, intrapulpal calcifications, delay of tooth eruption, hypodontia/oligodontia, pericoronal radiolucencies and unerupted teeth.</description>
        <dbReference type="MIM" id="204690"/>
    </disease>
    <text>The disease is caused by variants affecting the gene represented in this entry.</text>
</comment>
<comment type="similarity">
    <text evidence="22">Belongs to the FAM20 family.</text>
</comment>
<comment type="caution">
    <text evidence="19">Although strongly related to other members of the family, lacks the kinase activity. A conserved Asp/Glu residue present in other members of the family, which coordinates the Mn(2+) ion and the ion-pair Lys and is indispensable for kinase activity, is replaced by a Gln in position 258.</text>
</comment>
<organism>
    <name type="scientific">Homo sapiens</name>
    <name type="common">Human</name>
    <dbReference type="NCBI Taxonomy" id="9606"/>
    <lineage>
        <taxon>Eukaryota</taxon>
        <taxon>Metazoa</taxon>
        <taxon>Chordata</taxon>
        <taxon>Craniata</taxon>
        <taxon>Vertebrata</taxon>
        <taxon>Euteleostomi</taxon>
        <taxon>Mammalia</taxon>
        <taxon>Eutheria</taxon>
        <taxon>Euarchontoglires</taxon>
        <taxon>Primates</taxon>
        <taxon>Haplorrhini</taxon>
        <taxon>Catarrhini</taxon>
        <taxon>Hominidae</taxon>
        <taxon>Homo</taxon>
    </lineage>
</organism>
<proteinExistence type="evidence at protein level"/>
<evidence type="ECO:0000250" key="1">
    <source>
        <dbReference type="UniProtKB" id="Q8CID3"/>
    </source>
</evidence>
<evidence type="ECO:0000250" key="2">
    <source>
        <dbReference type="UniProtKB" id="Q9XTW2"/>
    </source>
</evidence>
<evidence type="ECO:0000255" key="3"/>
<evidence type="ECO:0000256" key="4">
    <source>
        <dbReference type="SAM" id="MobiDB-lite"/>
    </source>
</evidence>
<evidence type="ECO:0000269" key="5">
    <source>
    </source>
</evidence>
<evidence type="ECO:0000269" key="6">
    <source>
    </source>
</evidence>
<evidence type="ECO:0000269" key="7">
    <source>
    </source>
</evidence>
<evidence type="ECO:0000269" key="8">
    <source>
    </source>
</evidence>
<evidence type="ECO:0000269" key="9">
    <source>
    </source>
</evidence>
<evidence type="ECO:0000269" key="10">
    <source>
    </source>
</evidence>
<evidence type="ECO:0000269" key="11">
    <source>
    </source>
</evidence>
<evidence type="ECO:0000269" key="12">
    <source>
    </source>
</evidence>
<evidence type="ECO:0000269" key="13">
    <source>
    </source>
</evidence>
<evidence type="ECO:0000269" key="14">
    <source>
    </source>
</evidence>
<evidence type="ECO:0000269" key="15">
    <source>
    </source>
</evidence>
<evidence type="ECO:0000269" key="16">
    <source>
    </source>
</evidence>
<evidence type="ECO:0000269" key="17">
    <source>
    </source>
</evidence>
<evidence type="ECO:0000269" key="18">
    <source>
    </source>
</evidence>
<evidence type="ECO:0000269" key="19">
    <source>
    </source>
</evidence>
<evidence type="ECO:0000269" key="20">
    <source>
    </source>
</evidence>
<evidence type="ECO:0000303" key="21">
    <source>
    </source>
</evidence>
<evidence type="ECO:0000305" key="22"/>
<evidence type="ECO:0000312" key="23">
    <source>
        <dbReference type="HGNC" id="HGNC:23015"/>
    </source>
</evidence>
<evidence type="ECO:0007829" key="24">
    <source>
        <dbReference type="PDB" id="5WRR"/>
    </source>
</evidence>
<evidence type="ECO:0007829" key="25">
    <source>
        <dbReference type="PDB" id="5YH3"/>
    </source>
</evidence>
<reference key="1">
    <citation type="journal article" date="2004" name="Nat. Genet.">
        <title>Complete sequencing and characterization of 21,243 full-length human cDNAs.</title>
        <authorList>
            <person name="Ota T."/>
            <person name="Suzuki Y."/>
            <person name="Nishikawa T."/>
            <person name="Otsuki T."/>
            <person name="Sugiyama T."/>
            <person name="Irie R."/>
            <person name="Wakamatsu A."/>
            <person name="Hayashi K."/>
            <person name="Sato H."/>
            <person name="Nagai K."/>
            <person name="Kimura K."/>
            <person name="Makita H."/>
            <person name="Sekine M."/>
            <person name="Obayashi M."/>
            <person name="Nishi T."/>
            <person name="Shibahara T."/>
            <person name="Tanaka T."/>
            <person name="Ishii S."/>
            <person name="Yamamoto J."/>
            <person name="Saito K."/>
            <person name="Kawai Y."/>
            <person name="Isono Y."/>
            <person name="Nakamura Y."/>
            <person name="Nagahari K."/>
            <person name="Murakami K."/>
            <person name="Yasuda T."/>
            <person name="Iwayanagi T."/>
            <person name="Wagatsuma M."/>
            <person name="Shiratori A."/>
            <person name="Sudo H."/>
            <person name="Hosoiri T."/>
            <person name="Kaku Y."/>
            <person name="Kodaira H."/>
            <person name="Kondo H."/>
            <person name="Sugawara M."/>
            <person name="Takahashi M."/>
            <person name="Kanda K."/>
            <person name="Yokoi T."/>
            <person name="Furuya T."/>
            <person name="Kikkawa E."/>
            <person name="Omura Y."/>
            <person name="Abe K."/>
            <person name="Kamihara K."/>
            <person name="Katsuta N."/>
            <person name="Sato K."/>
            <person name="Tanikawa M."/>
            <person name="Yamazaki M."/>
            <person name="Ninomiya K."/>
            <person name="Ishibashi T."/>
            <person name="Yamashita H."/>
            <person name="Murakawa K."/>
            <person name="Fujimori K."/>
            <person name="Tanai H."/>
            <person name="Kimata M."/>
            <person name="Watanabe M."/>
            <person name="Hiraoka S."/>
            <person name="Chiba Y."/>
            <person name="Ishida S."/>
            <person name="Ono Y."/>
            <person name="Takiguchi S."/>
            <person name="Watanabe S."/>
            <person name="Yosida M."/>
            <person name="Hotuta T."/>
            <person name="Kusano J."/>
            <person name="Kanehori K."/>
            <person name="Takahashi-Fujii A."/>
            <person name="Hara H."/>
            <person name="Tanase T.-O."/>
            <person name="Nomura Y."/>
            <person name="Togiya S."/>
            <person name="Komai F."/>
            <person name="Hara R."/>
            <person name="Takeuchi K."/>
            <person name="Arita M."/>
            <person name="Imose N."/>
            <person name="Musashino K."/>
            <person name="Yuuki H."/>
            <person name="Oshima A."/>
            <person name="Sasaki N."/>
            <person name="Aotsuka S."/>
            <person name="Yoshikawa Y."/>
            <person name="Matsunawa H."/>
            <person name="Ichihara T."/>
            <person name="Shiohata N."/>
            <person name="Sano S."/>
            <person name="Moriya S."/>
            <person name="Momiyama H."/>
            <person name="Satoh N."/>
            <person name="Takami S."/>
            <person name="Terashima Y."/>
            <person name="Suzuki O."/>
            <person name="Nakagawa S."/>
            <person name="Senoh A."/>
            <person name="Mizoguchi H."/>
            <person name="Goto Y."/>
            <person name="Shimizu F."/>
            <person name="Wakebe H."/>
            <person name="Hishigaki H."/>
            <person name="Watanabe T."/>
            <person name="Sugiyama A."/>
            <person name="Takemoto M."/>
            <person name="Kawakami B."/>
            <person name="Yamazaki M."/>
            <person name="Watanabe K."/>
            <person name="Kumagai A."/>
            <person name="Itakura S."/>
            <person name="Fukuzumi Y."/>
            <person name="Fujimori Y."/>
            <person name="Komiyama M."/>
            <person name="Tashiro H."/>
            <person name="Tanigami A."/>
            <person name="Fujiwara T."/>
            <person name="Ono T."/>
            <person name="Yamada K."/>
            <person name="Fujii Y."/>
            <person name="Ozaki K."/>
            <person name="Hirao M."/>
            <person name="Ohmori Y."/>
            <person name="Kawabata A."/>
            <person name="Hikiji T."/>
            <person name="Kobatake N."/>
            <person name="Inagaki H."/>
            <person name="Ikema Y."/>
            <person name="Okamoto S."/>
            <person name="Okitani R."/>
            <person name="Kawakami T."/>
            <person name="Noguchi S."/>
            <person name="Itoh T."/>
            <person name="Shigeta K."/>
            <person name="Senba T."/>
            <person name="Matsumura K."/>
            <person name="Nakajima Y."/>
            <person name="Mizuno T."/>
            <person name="Morinaga M."/>
            <person name="Sasaki M."/>
            <person name="Togashi T."/>
            <person name="Oyama M."/>
            <person name="Hata H."/>
            <person name="Watanabe M."/>
            <person name="Komatsu T."/>
            <person name="Mizushima-Sugano J."/>
            <person name="Satoh T."/>
            <person name="Shirai Y."/>
            <person name="Takahashi Y."/>
            <person name="Nakagawa K."/>
            <person name="Okumura K."/>
            <person name="Nagase T."/>
            <person name="Nomura N."/>
            <person name="Kikuchi H."/>
            <person name="Masuho Y."/>
            <person name="Yamashita R."/>
            <person name="Nakai K."/>
            <person name="Yada T."/>
            <person name="Nakamura Y."/>
            <person name="Ohara O."/>
            <person name="Isogai T."/>
            <person name="Sugano S."/>
        </authorList>
    </citation>
    <scope>NUCLEOTIDE SEQUENCE [LARGE SCALE MRNA]</scope>
    <scope>VARIANTS LYS-332 AND SER-530</scope>
    <source>
        <tissue>Placenta</tissue>
    </source>
</reference>
<reference key="2">
    <citation type="journal article" date="2003" name="Genome Res.">
        <title>The secreted protein discovery initiative (SPDI), a large-scale effort to identify novel human secreted and transmembrane proteins: a bioinformatics assessment.</title>
        <authorList>
            <person name="Clark H.F."/>
            <person name="Gurney A.L."/>
            <person name="Abaya E."/>
            <person name="Baker K."/>
            <person name="Baldwin D.T."/>
            <person name="Brush J."/>
            <person name="Chen J."/>
            <person name="Chow B."/>
            <person name="Chui C."/>
            <person name="Crowley C."/>
            <person name="Currell B."/>
            <person name="Deuel B."/>
            <person name="Dowd P."/>
            <person name="Eaton D."/>
            <person name="Foster J.S."/>
            <person name="Grimaldi C."/>
            <person name="Gu Q."/>
            <person name="Hass P.E."/>
            <person name="Heldens S."/>
            <person name="Huang A."/>
            <person name="Kim H.S."/>
            <person name="Klimowski L."/>
            <person name="Jin Y."/>
            <person name="Johnson S."/>
            <person name="Lee J."/>
            <person name="Lewis L."/>
            <person name="Liao D."/>
            <person name="Mark M.R."/>
            <person name="Robbie E."/>
            <person name="Sanchez C."/>
            <person name="Schoenfeld J."/>
            <person name="Seshagiri S."/>
            <person name="Simmons L."/>
            <person name="Singh J."/>
            <person name="Smith V."/>
            <person name="Stinson J."/>
            <person name="Vagts A."/>
            <person name="Vandlen R.L."/>
            <person name="Watanabe C."/>
            <person name="Wieand D."/>
            <person name="Woods K."/>
            <person name="Xie M.-H."/>
            <person name="Yansura D.G."/>
            <person name="Yi S."/>
            <person name="Yu G."/>
            <person name="Yuan J."/>
            <person name="Zhang M."/>
            <person name="Zhang Z."/>
            <person name="Goddard A.D."/>
            <person name="Wood W.I."/>
            <person name="Godowski P.J."/>
            <person name="Gray A.M."/>
        </authorList>
    </citation>
    <scope>NUCLEOTIDE SEQUENCE [LARGE SCALE MRNA]</scope>
    <scope>VARIANTS LYS-332 AND SER-530</scope>
</reference>
<reference key="3">
    <citation type="journal article" date="2006" name="Nature">
        <title>DNA sequence of human chromosome 17 and analysis of rearrangement in the human lineage.</title>
        <authorList>
            <person name="Zody M.C."/>
            <person name="Garber M."/>
            <person name="Adams D.J."/>
            <person name="Sharpe T."/>
            <person name="Harrow J."/>
            <person name="Lupski J.R."/>
            <person name="Nicholson C."/>
            <person name="Searle S.M."/>
            <person name="Wilming L."/>
            <person name="Young S.K."/>
            <person name="Abouelleil A."/>
            <person name="Allen N.R."/>
            <person name="Bi W."/>
            <person name="Bloom T."/>
            <person name="Borowsky M.L."/>
            <person name="Bugalter B.E."/>
            <person name="Butler J."/>
            <person name="Chang J.L."/>
            <person name="Chen C.-K."/>
            <person name="Cook A."/>
            <person name="Corum B."/>
            <person name="Cuomo C.A."/>
            <person name="de Jong P.J."/>
            <person name="DeCaprio D."/>
            <person name="Dewar K."/>
            <person name="FitzGerald M."/>
            <person name="Gilbert J."/>
            <person name="Gibson R."/>
            <person name="Gnerre S."/>
            <person name="Goldstein S."/>
            <person name="Grafham D.V."/>
            <person name="Grocock R."/>
            <person name="Hafez N."/>
            <person name="Hagopian D.S."/>
            <person name="Hart E."/>
            <person name="Norman C.H."/>
            <person name="Humphray S."/>
            <person name="Jaffe D.B."/>
            <person name="Jones M."/>
            <person name="Kamal M."/>
            <person name="Khodiyar V.K."/>
            <person name="LaButti K."/>
            <person name="Laird G."/>
            <person name="Lehoczky J."/>
            <person name="Liu X."/>
            <person name="Lokyitsang T."/>
            <person name="Loveland J."/>
            <person name="Lui A."/>
            <person name="Macdonald P."/>
            <person name="Major J.E."/>
            <person name="Matthews L."/>
            <person name="Mauceli E."/>
            <person name="McCarroll S.A."/>
            <person name="Mihalev A.H."/>
            <person name="Mudge J."/>
            <person name="Nguyen C."/>
            <person name="Nicol R."/>
            <person name="O'Leary S.B."/>
            <person name="Osoegawa K."/>
            <person name="Schwartz D.C."/>
            <person name="Shaw-Smith C."/>
            <person name="Stankiewicz P."/>
            <person name="Steward C."/>
            <person name="Swarbreck D."/>
            <person name="Venkataraman V."/>
            <person name="Whittaker C.A."/>
            <person name="Yang X."/>
            <person name="Zimmer A.R."/>
            <person name="Bradley A."/>
            <person name="Hubbard T."/>
            <person name="Birren B.W."/>
            <person name="Rogers J."/>
            <person name="Lander E.S."/>
            <person name="Nusbaum C."/>
        </authorList>
    </citation>
    <scope>NUCLEOTIDE SEQUENCE [LARGE SCALE GENOMIC DNA]</scope>
</reference>
<reference key="4">
    <citation type="journal article" date="2004" name="Genome Res.">
        <title>The status, quality, and expansion of the NIH full-length cDNA project: the Mammalian Gene Collection (MGC).</title>
        <authorList>
            <consortium name="The MGC Project Team"/>
        </authorList>
    </citation>
    <scope>NUCLEOTIDE SEQUENCE [LARGE SCALE MRNA]</scope>
    <scope>VARIANTS LYS-332 AND SER-530</scope>
    <source>
        <tissue>Brain</tissue>
    </source>
</reference>
<reference key="5">
    <citation type="journal article" date="2007" name="BMC Genomics">
        <title>The full-ORF clone resource of the German cDNA consortium.</title>
        <authorList>
            <person name="Bechtel S."/>
            <person name="Rosenfelder H."/>
            <person name="Duda A."/>
            <person name="Schmidt C.P."/>
            <person name="Ernst U."/>
            <person name="Wellenreuther R."/>
            <person name="Mehrle A."/>
            <person name="Schuster C."/>
            <person name="Bahr A."/>
            <person name="Bloecker H."/>
            <person name="Heubner D."/>
            <person name="Hoerlein A."/>
            <person name="Michel G."/>
            <person name="Wedler H."/>
            <person name="Koehrer K."/>
            <person name="Ottenwaelder B."/>
            <person name="Poustka A."/>
            <person name="Wiemann S."/>
            <person name="Schupp I."/>
        </authorList>
    </citation>
    <scope>NUCLEOTIDE SEQUENCE [LARGE SCALE MRNA] OF 202-541</scope>
    <scope>VARIANT SER-530</scope>
    <source>
        <tissue>Testis</tissue>
    </source>
</reference>
<reference key="6">
    <citation type="journal article" date="2005" name="BMC Genomics">
        <title>FAM20: an evolutionarily conserved family of secreted proteins expressed in hematopoietic cells.</title>
        <authorList>
            <person name="Nalbant D."/>
            <person name="Youn H."/>
            <person name="Nalbant S.I."/>
            <person name="Sharma S."/>
            <person name="Cobos E."/>
            <person name="Beale E.G."/>
            <person name="Du Y."/>
            <person name="Williams S.C."/>
        </authorList>
    </citation>
    <scope>TISSUE SPECIFICITY</scope>
</reference>
<reference key="7">
    <citation type="journal article" date="2011" name="Am. J. Hum. Genet.">
        <title>Whole-exome sequencing identifies FAM20A mutations as a cause of amelogenesis imperfecta and gingival hyperplasia syndrome.</title>
        <authorList>
            <person name="O'Sullivan J."/>
            <person name="Bitu C.C."/>
            <person name="Daly S.B."/>
            <person name="Urquhart J.E."/>
            <person name="Barron M.J."/>
            <person name="Bhaskar S.S."/>
            <person name="Martelli-Junior H."/>
            <person name="dos Santos Neto P.E."/>
            <person name="Mansilla M.A."/>
            <person name="Murray J.C."/>
            <person name="Coletta R.D."/>
            <person name="Black G.C."/>
            <person name="Dixon M.J."/>
        </authorList>
    </citation>
    <scope>INVOLVEMENT IN AI1G</scope>
</reference>
<reference key="8">
    <citation type="journal article" date="2013" name="J. Hum. Genet.">
        <title>Autosomal recessive gingival hyperplasia and dental anomalies caused by a 29-base pair duplication in the FAM20A gene.</title>
        <authorList>
            <person name="Cabral R.M."/>
            <person name="Kurban M."/>
            <person name="Rothman L."/>
            <person name="Wajid M."/>
            <person name="Shimomura Y."/>
            <person name="Petukhova L."/>
            <person name="Christiano A.M."/>
        </authorList>
    </citation>
    <scope>INVOLVEMENT IN AI1G</scope>
</reference>
<reference key="9">
    <citation type="journal article" date="2014" name="Am. J. Med. Genet. A">
        <title>Enamel-renal-gingival syndrome and FAM20A mutations.</title>
        <authorList>
            <person name="Kantaputra P.N."/>
            <person name="Kaewgahya M."/>
            <person name="Khemaleelakul U."/>
            <person name="Dejkhamron P."/>
            <person name="Sutthimethakorn S."/>
            <person name="Thongboonkerd V."/>
            <person name="Iamaroon A."/>
        </authorList>
    </citation>
    <scope>INVOLVEMENT IN AI1G</scope>
</reference>
<reference key="10">
    <citation type="journal article" date="2014" name="Am. J. Med. Genet. A">
        <title>Enamel-Renal-Gingival syndrome, hypodontia, and a novel FAM20A mutation.</title>
        <authorList>
            <person name="Kantaputra P.N."/>
            <person name="Bongkochwilawan C."/>
            <person name="Kaewgahya M."/>
            <person name="Ohazama A."/>
            <person name="Kayserili H."/>
            <person name="Erdem A.P."/>
            <person name="Aktoren O."/>
            <person name="Guven Y."/>
        </authorList>
    </citation>
    <scope>INVOLVEMENT IN AI1G</scope>
</reference>
<reference key="11">
    <citation type="journal article" date="2014" name="J. Proteomics">
        <title>An enzyme assisted RP-RPLC approach for in-depth analysis of human liver phosphoproteome.</title>
        <authorList>
            <person name="Bian Y."/>
            <person name="Song C."/>
            <person name="Cheng K."/>
            <person name="Dong M."/>
            <person name="Wang F."/>
            <person name="Huang J."/>
            <person name="Sun D."/>
            <person name="Wang L."/>
            <person name="Ye M."/>
            <person name="Zou H."/>
        </authorList>
    </citation>
    <scope>IDENTIFICATION BY MASS SPECTROMETRY [LARGE SCALE ANALYSIS]</scope>
    <source>
        <tissue>Liver</tissue>
    </source>
</reference>
<reference key="12">
    <citation type="journal article" date="2015" name="Arch. Oral Biol.">
        <title>Novel FAM20A mutation causes autosomal recessive amelogenesis imperfecta.</title>
        <authorList>
            <person name="Volodarsky M."/>
            <person name="Zilberman U."/>
            <person name="Birk O.S."/>
        </authorList>
    </citation>
    <scope>INVOLVEMENT IN AI1G</scope>
</reference>
<reference key="13">
    <citation type="journal article" date="2015" name="BMC Oral Health">
        <title>Further evidence for causal FAM20A mutations and first case of amelogenesis imperfecta and gingival hyperplasia syndrome in Morocco: a case report.</title>
        <authorList>
            <person name="Cherkaoui Jaouad I."/>
            <person name="El Alloussi M."/>
            <person name="Chafai El Alaoui S."/>
            <person name="Laarabi F.Z."/>
            <person name="Lyahyai J."/>
            <person name="Sefiani A."/>
        </authorList>
    </citation>
    <scope>INVOLVEMENT IN AI1G</scope>
</reference>
<reference key="14">
    <citation type="journal article" date="2015" name="Elife">
        <title>A secretory kinase complex regulates extracellular protein phosphorylation.</title>
        <authorList>
            <person name="Cui J."/>
            <person name="Xiao J."/>
            <person name="Tagliabracci V.S."/>
            <person name="Wen J."/>
            <person name="Rahdar M."/>
            <person name="Dixon J.E."/>
        </authorList>
    </citation>
    <scope>FUNCTION</scope>
    <scope>INTERACTION WITH FAM20C</scope>
    <scope>MUTAGENESIS OF GLN-258</scope>
    <scope>CHARACTERIZATION OF VARIANTS AI1G ARG-173; ASP-331 AND ASN-403</scope>
</reference>
<reference key="15">
    <citation type="journal article" date="2012" name="Hum. Mutat.">
        <title>Novel FAM20A mutations in hypoplastic amelogenesis imperfecta.</title>
        <authorList>
            <person name="Cho S.H."/>
            <person name="Seymen F."/>
            <person name="Lee K.E."/>
            <person name="Lee S.K."/>
            <person name="Kweon Y.S."/>
            <person name="Kim K.J."/>
            <person name="Jung S.E."/>
            <person name="Song S.J."/>
            <person name="Yildirim M."/>
            <person name="Bayram M."/>
            <person name="Tuna E.B."/>
            <person name="Gencay K."/>
            <person name="Kim J.W."/>
        </authorList>
    </citation>
    <scope>VARIANT AI1G 197-ASP--ILE-214 DELINS VAL-197</scope>
</reference>
<reference key="16">
    <citation type="journal article" date="2012" name="Nephron Physiol.">
        <title>Nephrocalcinosis (enamel renal syndrome) caused by autosomal recessive FAM20A mutations.</title>
        <authorList>
            <person name="Jaureguiberry G."/>
            <person name="De la Dure-Molla M."/>
            <person name="Parry D."/>
            <person name="Quentric M."/>
            <person name="Himmerkus N."/>
            <person name="Koike T."/>
            <person name="Poulter J."/>
            <person name="Klootwijk E."/>
            <person name="Robinette S.L."/>
            <person name="Howie A.J."/>
            <person name="Patel V."/>
            <person name="Figueres M.L."/>
            <person name="Stanescu H.C."/>
            <person name="Issler N."/>
            <person name="Nicholson J.K."/>
            <person name="Bockenhauer D."/>
            <person name="Laing C."/>
            <person name="Walsh S.B."/>
            <person name="McCredie D.A."/>
            <person name="Povey S."/>
            <person name="Asselin A."/>
            <person name="Picard A."/>
            <person name="Coulomb A."/>
            <person name="Medlar A.J."/>
            <person name="Bailleul-Forestier I."/>
            <person name="Verloes A."/>
            <person name="Le Caignec C."/>
            <person name="Roussey G."/>
            <person name="Guiol J."/>
            <person name="Isidor B."/>
            <person name="Logan C."/>
            <person name="Shore R."/>
            <person name="Johnson C."/>
            <person name="Inglehearn C."/>
            <person name="Al-Bahlani S."/>
            <person name="Schmittbuhl M."/>
            <person name="Clauss F."/>
            <person name="Huckert M."/>
            <person name="Laugel V."/>
            <person name="Ginglinger E."/>
            <person name="Pajarola S."/>
            <person name="Sparta G."/>
            <person name="Bartholdi D."/>
            <person name="Rauch A."/>
            <person name="Addor M.C."/>
            <person name="Yamaguti P.M."/>
            <person name="Safatle H.P."/>
            <person name="Acevedo A.C."/>
            <person name="Martelli-Junior H."/>
            <person name="dos Santos Netos P.E."/>
            <person name="Coletta R.D."/>
            <person name="Gruessel S."/>
            <person name="Sandmann C."/>
            <person name="Ruehmann D."/>
            <person name="Langman C.B."/>
            <person name="Scheinman S.J."/>
            <person name="Ozdemir-Ozenen D."/>
            <person name="Hart T.C."/>
            <person name="Hart P.S."/>
            <person name="Neugebauer U."/>
            <person name="Schlatter E."/>
            <person name="Houillier P."/>
            <person name="Gahl W.A."/>
            <person name="Vikkula M."/>
            <person name="Bloch-Zupan A."/>
            <person name="Bleich M."/>
            <person name="Kitagawa H."/>
            <person name="Unwin R.J."/>
            <person name="Mighell A."/>
            <person name="Berdal A."/>
            <person name="Kleta R."/>
        </authorList>
    </citation>
    <scope>VARIANT AI1G ARG-173</scope>
</reference>
<reference key="17">
    <citation type="journal article" date="2013" name="PLoS Genet.">
        <title>FAM20A mutations can cause enamel-renal syndrome (ERS).</title>
        <authorList>
            <person name="Wang S.K."/>
            <person name="Aref P."/>
            <person name="Hu Y."/>
            <person name="Milkovich R.N."/>
            <person name="Simmer J.P."/>
            <person name="El-Khateeb M."/>
            <person name="Daggag H."/>
            <person name="Baqain Z.H."/>
            <person name="Hu J.C."/>
        </authorList>
    </citation>
    <scope>VARIANT AI1G ASP-331</scope>
    <scope>SUBCELLULAR LOCATION</scope>
</reference>
<reference key="18">
    <citation type="journal article" date="2014" name="J. Dent. Res.">
        <title>FAM20A mutations associated with enamel renal syndrome.</title>
        <authorList>
            <person name="Wang S.K."/>
            <person name="Reid B.M."/>
            <person name="Dugan S.L."/>
            <person name="Roggenbuck J.A."/>
            <person name="Read L."/>
            <person name="Aref P."/>
            <person name="Taheri A.P."/>
            <person name="Yeganeh M.Z."/>
            <person name="Simmer J.P."/>
            <person name="Hu J.C."/>
        </authorList>
    </citation>
    <scope>VARIANT AI1G ASN-403</scope>
</reference>
<dbReference type="EMBL" id="AK056789">
    <property type="protein sequence ID" value="BAB71285.1"/>
    <property type="molecule type" value="mRNA"/>
</dbReference>
<dbReference type="EMBL" id="AY358197">
    <property type="protein sequence ID" value="AAQ88564.1"/>
    <property type="molecule type" value="mRNA"/>
</dbReference>
<dbReference type="EMBL" id="AC079210">
    <property type="status" value="NOT_ANNOTATED_CDS"/>
    <property type="molecule type" value="Genomic_DNA"/>
</dbReference>
<dbReference type="EMBL" id="BC136686">
    <property type="protein sequence ID" value="AAI36687.1"/>
    <property type="molecule type" value="mRNA"/>
</dbReference>
<dbReference type="EMBL" id="BC136689">
    <property type="protein sequence ID" value="AAI36690.1"/>
    <property type="molecule type" value="mRNA"/>
</dbReference>
<dbReference type="EMBL" id="AL133105">
    <property type="protein sequence ID" value="CAB61412.1"/>
    <property type="molecule type" value="mRNA"/>
</dbReference>
<dbReference type="CCDS" id="CCDS11679.1"/>
<dbReference type="PIR" id="T42684">
    <property type="entry name" value="T42684"/>
</dbReference>
<dbReference type="RefSeq" id="NP_001230675.1">
    <property type="nucleotide sequence ID" value="NM_001243746.1"/>
</dbReference>
<dbReference type="RefSeq" id="NP_060035.2">
    <property type="nucleotide sequence ID" value="NM_017565.4"/>
</dbReference>
<dbReference type="PDB" id="5WRR">
    <property type="method" value="X-ray"/>
    <property type="resolution" value="2.51 A"/>
    <property type="chains" value="A/B=89-526"/>
</dbReference>
<dbReference type="PDB" id="5WRS">
    <property type="method" value="X-ray"/>
    <property type="resolution" value="2.75 A"/>
    <property type="chains" value="A/B=89-526"/>
</dbReference>
<dbReference type="PDB" id="5YH2">
    <property type="method" value="X-ray"/>
    <property type="resolution" value="3.55 A"/>
    <property type="chains" value="A/B=63-529"/>
</dbReference>
<dbReference type="PDB" id="5YH3">
    <property type="method" value="X-ray"/>
    <property type="resolution" value="3.30 A"/>
    <property type="chains" value="A/B=63-529"/>
</dbReference>
<dbReference type="PDBsum" id="5WRR"/>
<dbReference type="PDBsum" id="5WRS"/>
<dbReference type="PDBsum" id="5YH2"/>
<dbReference type="PDBsum" id="5YH3"/>
<dbReference type="SMR" id="Q96MK3"/>
<dbReference type="BioGRID" id="120133">
    <property type="interactions" value="1"/>
</dbReference>
<dbReference type="FunCoup" id="Q96MK3">
    <property type="interactions" value="207"/>
</dbReference>
<dbReference type="IntAct" id="Q96MK3">
    <property type="interactions" value="5"/>
</dbReference>
<dbReference type="STRING" id="9606.ENSP00000468308"/>
<dbReference type="GlyCosmos" id="Q96MK3">
    <property type="glycosylation" value="7 sites, 1 glycan"/>
</dbReference>
<dbReference type="GlyGen" id="Q96MK3">
    <property type="glycosylation" value="8 sites, 1 N-linked glycan (1 site), 1 O-linked glycan (2 sites)"/>
</dbReference>
<dbReference type="iPTMnet" id="Q96MK3"/>
<dbReference type="PhosphoSitePlus" id="Q96MK3"/>
<dbReference type="BioMuta" id="FAM20A"/>
<dbReference type="DMDM" id="269849750"/>
<dbReference type="jPOST" id="Q96MK3"/>
<dbReference type="MassIVE" id="Q96MK3"/>
<dbReference type="PaxDb" id="9606-ENSP00000468308"/>
<dbReference type="PeptideAtlas" id="Q96MK3"/>
<dbReference type="ProteomicsDB" id="77370"/>
<dbReference type="Antibodypedia" id="31793">
    <property type="antibodies" value="110 antibodies from 22 providers"/>
</dbReference>
<dbReference type="DNASU" id="54757"/>
<dbReference type="Ensembl" id="ENST00000592554.2">
    <property type="protein sequence ID" value="ENSP00000468308.1"/>
    <property type="gene ID" value="ENSG00000108950.12"/>
</dbReference>
<dbReference type="GeneID" id="54757"/>
<dbReference type="KEGG" id="hsa:54757"/>
<dbReference type="MANE-Select" id="ENST00000592554.2">
    <property type="protein sequence ID" value="ENSP00000468308.1"/>
    <property type="RefSeq nucleotide sequence ID" value="NM_017565.4"/>
    <property type="RefSeq protein sequence ID" value="NP_060035.2"/>
</dbReference>
<dbReference type="UCSC" id="uc002jho.4">
    <property type="organism name" value="human"/>
</dbReference>
<dbReference type="AGR" id="HGNC:23015"/>
<dbReference type="CTD" id="54757"/>
<dbReference type="DisGeNET" id="54757"/>
<dbReference type="GeneCards" id="FAM20A"/>
<dbReference type="HGNC" id="HGNC:23015">
    <property type="gene designation" value="FAM20A"/>
</dbReference>
<dbReference type="HPA" id="ENSG00000108950">
    <property type="expression patterns" value="Tissue enhanced (liver)"/>
</dbReference>
<dbReference type="MalaCards" id="FAM20A"/>
<dbReference type="MIM" id="204690">
    <property type="type" value="phenotype"/>
</dbReference>
<dbReference type="MIM" id="611062">
    <property type="type" value="gene"/>
</dbReference>
<dbReference type="neXtProt" id="NX_Q96MK3"/>
<dbReference type="OpenTargets" id="ENSG00000108950"/>
<dbReference type="Orphanet" id="1031">
    <property type="disease" value="Enamel-renal syndrome"/>
</dbReference>
<dbReference type="PharmGKB" id="PA134888583"/>
<dbReference type="VEuPathDB" id="HostDB:ENSG00000108950"/>
<dbReference type="eggNOG" id="KOG3829">
    <property type="taxonomic scope" value="Eukaryota"/>
</dbReference>
<dbReference type="GeneTree" id="ENSGT00950000182951"/>
<dbReference type="HOGENOM" id="CLU_028926_2_0_1"/>
<dbReference type="InParanoid" id="Q96MK3"/>
<dbReference type="OMA" id="PLTQCCI"/>
<dbReference type="OrthoDB" id="8583677at2759"/>
<dbReference type="PAN-GO" id="Q96MK3">
    <property type="GO annotations" value="3 GO annotations based on evolutionary models"/>
</dbReference>
<dbReference type="PhylomeDB" id="Q96MK3"/>
<dbReference type="PathwayCommons" id="Q96MK3"/>
<dbReference type="Reactome" id="R-HSA-381426">
    <property type="pathway name" value="Regulation of Insulin-like Growth Factor (IGF) transport and uptake by Insulin-like Growth Factor Binding Proteins (IGFBPs)"/>
</dbReference>
<dbReference type="Reactome" id="R-HSA-8957275">
    <property type="pathway name" value="Post-translational protein phosphorylation"/>
</dbReference>
<dbReference type="SignaLink" id="Q96MK3"/>
<dbReference type="BioGRID-ORCS" id="54757">
    <property type="hits" value="21 hits in 1146 CRISPR screens"/>
</dbReference>
<dbReference type="ChiTaRS" id="FAM20A">
    <property type="organism name" value="human"/>
</dbReference>
<dbReference type="GeneWiki" id="FAM20A"/>
<dbReference type="GenomeRNAi" id="54757"/>
<dbReference type="Pharos" id="Q96MK3">
    <property type="development level" value="Tbio"/>
</dbReference>
<dbReference type="PRO" id="PR:Q96MK3"/>
<dbReference type="Proteomes" id="UP000005640">
    <property type="component" value="Chromosome 17"/>
</dbReference>
<dbReference type="RNAct" id="Q96MK3">
    <property type="molecule type" value="protein"/>
</dbReference>
<dbReference type="Bgee" id="ENSG00000108950">
    <property type="expression patterns" value="Expressed in right lobe of liver and 128 other cell types or tissues"/>
</dbReference>
<dbReference type="ExpressionAtlas" id="Q96MK3">
    <property type="expression patterns" value="baseline and differential"/>
</dbReference>
<dbReference type="GO" id="GO:0005737">
    <property type="term" value="C:cytoplasm"/>
    <property type="evidence" value="ECO:0000250"/>
    <property type="project" value="UniProtKB"/>
</dbReference>
<dbReference type="GO" id="GO:0005783">
    <property type="term" value="C:endoplasmic reticulum"/>
    <property type="evidence" value="ECO:0000250"/>
    <property type="project" value="UniProtKB"/>
</dbReference>
<dbReference type="GO" id="GO:0070062">
    <property type="term" value="C:extracellular exosome"/>
    <property type="evidence" value="ECO:0007005"/>
    <property type="project" value="UniProtKB"/>
</dbReference>
<dbReference type="GO" id="GO:0005615">
    <property type="term" value="C:extracellular space"/>
    <property type="evidence" value="ECO:0000314"/>
    <property type="project" value="UniProtKB"/>
</dbReference>
<dbReference type="GO" id="GO:0005794">
    <property type="term" value="C:Golgi apparatus"/>
    <property type="evidence" value="ECO:0007669"/>
    <property type="project" value="UniProtKB-SubCell"/>
</dbReference>
<dbReference type="GO" id="GO:0043539">
    <property type="term" value="F:protein serine/threonine kinase activator activity"/>
    <property type="evidence" value="ECO:0000314"/>
    <property type="project" value="UniProtKB"/>
</dbReference>
<dbReference type="GO" id="GO:0031214">
    <property type="term" value="P:biomineral tissue development"/>
    <property type="evidence" value="ECO:0000315"/>
    <property type="project" value="UniProtKB"/>
</dbReference>
<dbReference type="GO" id="GO:0055074">
    <property type="term" value="P:calcium ion homeostasis"/>
    <property type="evidence" value="ECO:0000315"/>
    <property type="project" value="UniProtKB"/>
</dbReference>
<dbReference type="GO" id="GO:0070166">
    <property type="term" value="P:enamel mineralization"/>
    <property type="evidence" value="ECO:0000315"/>
    <property type="project" value="UniProtKB"/>
</dbReference>
<dbReference type="GO" id="GO:0001934">
    <property type="term" value="P:positive regulation of protein phosphorylation"/>
    <property type="evidence" value="ECO:0000314"/>
    <property type="project" value="UniProtKB"/>
</dbReference>
<dbReference type="GO" id="GO:0009617">
    <property type="term" value="P:response to bacterium"/>
    <property type="evidence" value="ECO:0007669"/>
    <property type="project" value="Ensembl"/>
</dbReference>
<dbReference type="GO" id="GO:0044691">
    <property type="term" value="P:tooth eruption"/>
    <property type="evidence" value="ECO:0000315"/>
    <property type="project" value="UniProtKB"/>
</dbReference>
<dbReference type="CDD" id="cd10469">
    <property type="entry name" value="FAM20A_C"/>
    <property type="match status" value="1"/>
</dbReference>
<dbReference type="InterPro" id="IPR024869">
    <property type="entry name" value="FAM20"/>
</dbReference>
<dbReference type="InterPro" id="IPR009581">
    <property type="entry name" value="FAM20_C"/>
</dbReference>
<dbReference type="PANTHER" id="PTHR12450">
    <property type="entry name" value="DENTIN MATRIX PROTEIN 4 PROTEIN FAM20"/>
    <property type="match status" value="1"/>
</dbReference>
<dbReference type="PANTHER" id="PTHR12450:SF12">
    <property type="entry name" value="PSEUDOKINASE FAM20A"/>
    <property type="match status" value="1"/>
</dbReference>
<dbReference type="Pfam" id="PF06702">
    <property type="entry name" value="Fam20C"/>
    <property type="match status" value="1"/>
</dbReference>
<sequence>MPGLRRDRLLTLLLLGALLSADLYFHLWPQVQRQLRPRERPRGCPCTGRASSLARDSAAAASDPGTIVHNFSRTEPRTEPAGGSHSGSSSKLQALFAHPLYNVPEEPPLLGAEDSLLASQEALRYYRRKVARWNRRHKMYREQMNLTSLDPPLQLRLEASWVQFHLGINRHGLYSRSSPVVSKLLQDMRHFPTISADYSQDEKALLGACDCTQIVKPSGVHLKLVLRFSDFGKAMFKPMRQQRDEETPVDFFYFIDFQRHNAEIAAFHLDRILDFRRVPPTVGRIVNVTKEILEVTKNEILQSVFFVSPASNVCFFAKCPYMCKTEYAVCGNPHLLEGSLSAFLPSLNLAPRLSVPNPWIRSYTLAGKEEWEVNPLYCDTVKQIYPYNNSQRLLNVIDMAIFDFLIGNMDRHHYEMFTKFGDDGFLIHLDNARGFGRHSHDEISILSPLSQCCMIKKKTLLHLQLLAQADYRLSDVMRESLLEDQLSPVLTEPHLLALDRRLQTILRTVEGCIVAHGQQSVIVDGPVEQLAPDSGQANLTS</sequence>
<name>FA20A_HUMAN</name>
<accession>Q96MK3</accession>
<accession>B2RN47</accession>
<accession>B2RN49</accession>
<accession>Q9UF95</accession>
<feature type="signal peptide" evidence="3">
    <location>
        <begin position="1"/>
        <end position="33"/>
    </location>
</feature>
<feature type="chain" id="PRO_0000008743" description="Pseudokinase FAM20A">
    <location>
        <begin position="34"/>
        <end position="541"/>
    </location>
</feature>
<feature type="region of interest" description="Disordered" evidence="4">
    <location>
        <begin position="38"/>
        <end position="90"/>
    </location>
</feature>
<feature type="compositionally biased region" description="Low complexity" evidence="4">
    <location>
        <begin position="49"/>
        <end position="63"/>
    </location>
</feature>
<feature type="glycosylation site" description="N-linked (GlcNAc...) asparagine" evidence="3">
    <location>
        <position position="70"/>
    </location>
</feature>
<feature type="glycosylation site" description="N-linked (GlcNAc...) asparagine" evidence="3">
    <location>
        <position position="145"/>
    </location>
</feature>
<feature type="glycosylation site" description="N-linked (GlcNAc...) asparagine" evidence="3">
    <location>
        <position position="287"/>
    </location>
</feature>
<feature type="glycosylation site" description="N-linked (GlcNAc...) asparagine" evidence="3">
    <location>
        <position position="388"/>
    </location>
</feature>
<feature type="glycosylation site" description="N-linked (GlcNAc...) asparagine" evidence="3">
    <location>
        <position position="538"/>
    </location>
</feature>
<feature type="disulfide bond" evidence="2">
    <location>
        <begin position="314"/>
        <end position="330"/>
    </location>
</feature>
<feature type="disulfide bond" evidence="2">
    <location>
        <begin position="319"/>
        <end position="323"/>
    </location>
</feature>
<feature type="disulfide bond" evidence="2">
    <location>
        <begin position="378"/>
        <end position="452"/>
    </location>
</feature>
<feature type="disulfide bond" evidence="2">
    <location>
        <begin position="453"/>
        <end position="512"/>
    </location>
</feature>
<feature type="sequence variant" id="VAR_072170" description="In AI1G; impaired folding of the protein; abolishes ability to activate FAM20C protein kinase activity." evidence="12 19">
    <original>L</original>
    <variation>R</variation>
    <location>
        <position position="173"/>
    </location>
</feature>
<feature type="sequence variant" id="VAR_066859" description="In AI1G." evidence="11">
    <original>DYSQDEKALLGACDCTQI</original>
    <variation>V</variation>
    <location>
        <begin position="197"/>
        <end position="214"/>
    </location>
</feature>
<feature type="sequence variant" id="VAR_072171" description="In AI1G; impaired folding of the protein; abolishes ability to activate FAM20C protein kinase activity; dbSNP:rs981673034." evidence="13 19">
    <original>G</original>
    <variation>D</variation>
    <location>
        <position position="331"/>
    </location>
</feature>
<feature type="sequence variant" id="VAR_059282" description="In dbSNP:rs2302234." evidence="5 6 7">
    <original>N</original>
    <variation>K</variation>
    <location>
        <position position="332"/>
    </location>
</feature>
<feature type="sequence variant" id="VAR_072172" description="In AI1G; impaired folding of the protein; abolishes ability to activate FAM20C protein kinase activity; dbSNP:rs377432171." evidence="15 19">
    <original>D</original>
    <variation>N</variation>
    <location>
        <position position="403"/>
    </location>
</feature>
<feature type="sequence variant" id="VAR_059283" description="In dbSNP:rs2907373." evidence="5 6 7 9">
    <original>L</original>
    <variation>S</variation>
    <location>
        <position position="530"/>
    </location>
</feature>
<feature type="mutagenesis site" description="Able to hydrolyze ATP and display some protein kinase activity." evidence="19">
    <original>Q</original>
    <variation>E</variation>
    <location>
        <position position="258"/>
    </location>
</feature>
<feature type="helix" evidence="24">
    <location>
        <begin position="91"/>
        <end position="97"/>
    </location>
</feature>
<feature type="helix" evidence="24">
    <location>
        <begin position="99"/>
        <end position="102"/>
    </location>
</feature>
<feature type="turn" evidence="24">
    <location>
        <begin position="112"/>
        <end position="114"/>
    </location>
</feature>
<feature type="strand" evidence="24">
    <location>
        <begin position="115"/>
        <end position="117"/>
    </location>
</feature>
<feature type="helix" evidence="24">
    <location>
        <begin position="119"/>
        <end position="143"/>
    </location>
</feature>
<feature type="helix" evidence="24">
    <location>
        <begin position="160"/>
        <end position="167"/>
    </location>
</feature>
<feature type="strand" evidence="24">
    <location>
        <begin position="172"/>
        <end position="174"/>
    </location>
</feature>
<feature type="helix" evidence="24">
    <location>
        <begin position="179"/>
        <end position="190"/>
    </location>
</feature>
<feature type="strand" evidence="24">
    <location>
        <begin position="193"/>
        <end position="198"/>
    </location>
</feature>
<feature type="helix" evidence="24">
    <location>
        <begin position="200"/>
        <end position="203"/>
    </location>
</feature>
<feature type="strand" evidence="24">
    <location>
        <begin position="206"/>
        <end position="208"/>
    </location>
</feature>
<feature type="turn" evidence="24">
    <location>
        <begin position="212"/>
        <end position="214"/>
    </location>
</feature>
<feature type="strand" evidence="25">
    <location>
        <begin position="220"/>
        <end position="222"/>
    </location>
</feature>
<feature type="strand" evidence="24">
    <location>
        <begin position="224"/>
        <end position="228"/>
    </location>
</feature>
<feature type="strand" evidence="24">
    <location>
        <begin position="233"/>
        <end position="238"/>
    </location>
</feature>
<feature type="helix" evidence="24">
    <location>
        <begin position="244"/>
        <end position="246"/>
    </location>
</feature>
<feature type="helix" evidence="24">
    <location>
        <begin position="252"/>
        <end position="254"/>
    </location>
</feature>
<feature type="helix" evidence="24">
    <location>
        <begin position="259"/>
        <end position="272"/>
    </location>
</feature>
<feature type="strand" evidence="24">
    <location>
        <begin position="281"/>
        <end position="287"/>
    </location>
</feature>
<feature type="helix" evidence="24">
    <location>
        <begin position="288"/>
        <end position="291"/>
    </location>
</feature>
<feature type="turn" evidence="24">
    <location>
        <begin position="292"/>
        <end position="295"/>
    </location>
</feature>
<feature type="helix" evidence="24">
    <location>
        <begin position="299"/>
        <end position="303"/>
    </location>
</feature>
<feature type="strand" evidence="24">
    <location>
        <begin position="305"/>
        <end position="307"/>
    </location>
</feature>
<feature type="strand" evidence="24">
    <location>
        <begin position="313"/>
        <end position="316"/>
    </location>
</feature>
<feature type="helix" evidence="24">
    <location>
        <begin position="318"/>
        <end position="322"/>
    </location>
</feature>
<feature type="strand" evidence="24">
    <location>
        <begin position="328"/>
        <end position="330"/>
    </location>
</feature>
<feature type="strand" evidence="24">
    <location>
        <begin position="332"/>
        <end position="342"/>
    </location>
</feature>
<feature type="turn" evidence="24">
    <location>
        <begin position="347"/>
        <end position="349"/>
    </location>
</feature>
<feature type="strand" evidence="24">
    <location>
        <begin position="352"/>
        <end position="356"/>
    </location>
</feature>
<feature type="strand" evidence="25">
    <location>
        <begin position="364"/>
        <end position="366"/>
    </location>
</feature>
<feature type="turn" evidence="24">
    <location>
        <begin position="371"/>
        <end position="373"/>
    </location>
</feature>
<feature type="helix" evidence="24">
    <location>
        <begin position="376"/>
        <end position="381"/>
    </location>
</feature>
<feature type="turn" evidence="24">
    <location>
        <begin position="385"/>
        <end position="388"/>
    </location>
</feature>
<feature type="helix" evidence="24">
    <location>
        <begin position="390"/>
        <end position="406"/>
    </location>
</feature>
<feature type="strand" evidence="24">
    <location>
        <begin position="413"/>
        <end position="417"/>
    </location>
</feature>
<feature type="helix" evidence="24">
    <location>
        <begin position="418"/>
        <end position="420"/>
    </location>
</feature>
<feature type="strand" evidence="24">
    <location>
        <begin position="434"/>
        <end position="436"/>
    </location>
</feature>
<feature type="helix" evidence="24">
    <location>
        <begin position="443"/>
        <end position="446"/>
    </location>
</feature>
<feature type="helix" evidence="24">
    <location>
        <begin position="447"/>
        <end position="452"/>
    </location>
</feature>
<feature type="helix" evidence="24">
    <location>
        <begin position="457"/>
        <end position="466"/>
    </location>
</feature>
<feature type="helix" evidence="24">
    <location>
        <begin position="469"/>
        <end position="471"/>
    </location>
</feature>
<feature type="helix" evidence="24">
    <location>
        <begin position="473"/>
        <end position="481"/>
    </location>
</feature>
<feature type="turn" evidence="24">
    <location>
        <begin position="485"/>
        <end position="488"/>
    </location>
</feature>
<feature type="helix" evidence="24">
    <location>
        <begin position="492"/>
        <end position="516"/>
    </location>
</feature>
<feature type="helix" evidence="24">
    <location>
        <begin position="518"/>
        <end position="521"/>
    </location>
</feature>
<keyword id="KW-0002">3D-structure</keyword>
<keyword id="KW-0986">Amelogenesis imperfecta</keyword>
<keyword id="KW-0091">Biomineralization</keyword>
<keyword id="KW-0225">Disease variant</keyword>
<keyword id="KW-1015">Disulfide bond</keyword>
<keyword id="KW-0256">Endoplasmic reticulum</keyword>
<keyword id="KW-0325">Glycoprotein</keyword>
<keyword id="KW-0333">Golgi apparatus</keyword>
<keyword id="KW-1267">Proteomics identification</keyword>
<keyword id="KW-1185">Reference proteome</keyword>
<keyword id="KW-0964">Secreted</keyword>
<keyword id="KW-0732">Signal</keyword>
<protein>
    <recommendedName>
        <fullName evidence="22">Pseudokinase FAM20A</fullName>
    </recommendedName>
</protein>
<gene>
    <name evidence="23" type="primary">FAM20A</name>
    <name evidence="21" type="ORF">UNQ9388/PRO34279</name>
</gene>